<protein>
    <recommendedName>
        <fullName evidence="1">UDP-4-amino-4-deoxy-L-arabinose--oxoglutarate aminotransferase</fullName>
        <ecNumber evidence="1">2.6.1.87</ecNumber>
    </recommendedName>
    <alternativeName>
        <fullName evidence="1">UDP-(beta-L-threo-pentapyranosyl-4''-ulose diphosphate) aminotransferase</fullName>
        <shortName evidence="1">UDP-Ara4O aminotransferase</shortName>
    </alternativeName>
    <alternativeName>
        <fullName evidence="1">UDP-4-amino-4-deoxy-L-arabinose aminotransferase</fullName>
    </alternativeName>
</protein>
<accession>Q31YK4</accession>
<gene>
    <name evidence="1" type="primary">arnB</name>
    <name type="ordered locus">SBO_2290</name>
</gene>
<proteinExistence type="inferred from homology"/>
<evidence type="ECO:0000255" key="1">
    <source>
        <dbReference type="HAMAP-Rule" id="MF_01167"/>
    </source>
</evidence>
<evidence type="ECO:0000305" key="2"/>
<comment type="function">
    <text evidence="1">Catalyzes the conversion of UDP-4-keto-arabinose (UDP-Ara4O) to UDP-4-amino-4-deoxy-L-arabinose (UDP-L-Ara4N). The modified arabinose is attached to lipid A and is required for resistance to polymyxin and cationic antimicrobial peptides.</text>
</comment>
<comment type="catalytic activity">
    <reaction evidence="1">
        <text>UDP-4-amino-4-deoxy-beta-L-arabinose + 2-oxoglutarate = UDP-beta-L-threo-pentopyranos-4-ulose + L-glutamate</text>
        <dbReference type="Rhea" id="RHEA:24710"/>
        <dbReference type="ChEBI" id="CHEBI:16810"/>
        <dbReference type="ChEBI" id="CHEBI:29985"/>
        <dbReference type="ChEBI" id="CHEBI:58708"/>
        <dbReference type="ChEBI" id="CHEBI:58710"/>
        <dbReference type="EC" id="2.6.1.87"/>
    </reaction>
</comment>
<comment type="cofactor">
    <cofactor evidence="1">
        <name>pyridoxal 5'-phosphate</name>
        <dbReference type="ChEBI" id="CHEBI:597326"/>
    </cofactor>
</comment>
<comment type="pathway">
    <text evidence="1">Nucleotide-sugar biosynthesis; UDP-4-deoxy-4-formamido-beta-L-arabinose biosynthesis; UDP-4-deoxy-4-formamido-beta-L-arabinose from UDP-alpha-D-glucuronate: step 2/3.</text>
</comment>
<comment type="pathway">
    <text evidence="1">Bacterial outer membrane biogenesis; lipopolysaccharide biosynthesis.</text>
</comment>
<comment type="subunit">
    <text evidence="1">Homodimer.</text>
</comment>
<comment type="similarity">
    <text evidence="1">Belongs to the DegT/DnrJ/EryC1 family. ArnB subfamily.</text>
</comment>
<comment type="sequence caution" evidence="2">
    <conflict type="erroneous initiation">
        <sequence resource="EMBL-CDS" id="ABB66854"/>
    </conflict>
</comment>
<reference key="1">
    <citation type="journal article" date="2005" name="Nucleic Acids Res.">
        <title>Genome dynamics and diversity of Shigella species, the etiologic agents of bacillary dysentery.</title>
        <authorList>
            <person name="Yang F."/>
            <person name="Yang J."/>
            <person name="Zhang X."/>
            <person name="Chen L."/>
            <person name="Jiang Y."/>
            <person name="Yan Y."/>
            <person name="Tang X."/>
            <person name="Wang J."/>
            <person name="Xiong Z."/>
            <person name="Dong J."/>
            <person name="Xue Y."/>
            <person name="Zhu Y."/>
            <person name="Xu X."/>
            <person name="Sun L."/>
            <person name="Chen S."/>
            <person name="Nie H."/>
            <person name="Peng J."/>
            <person name="Xu J."/>
            <person name="Wang Y."/>
            <person name="Yuan Z."/>
            <person name="Wen Y."/>
            <person name="Yao Z."/>
            <person name="Shen Y."/>
            <person name="Qiang B."/>
            <person name="Hou Y."/>
            <person name="Yu J."/>
            <person name="Jin Q."/>
        </authorList>
    </citation>
    <scope>NUCLEOTIDE SEQUENCE [LARGE SCALE GENOMIC DNA]</scope>
    <source>
        <strain>Sb227</strain>
    </source>
</reference>
<sequence>MSEFLPFSRPAMGVEELAAVKEVLESGWITTGPKNQALEQAFCQLTGNQHAIAVSSATAGMHITLMALEIGKGDEVITPSLTWVSTLNMISLLGATPVMVDVDRDTLMVTPEAIESAITPRTKAIIPVHYAGAPADIDAIRAIGERYGIAVIEDAAHAVGTYYKGRHIGAKGTAIFSFHAIKNITCAEGGLIVTDNENLARQLRMLKFHGLGVDAYDRQTWGRAPQAEVLTPGYKYNLTDINAAIALTQLAKLEHLNTRRREIAQQYQQALAALPFQPLSLPAWPHVHAWHLFIIRVDEQRCGISRDALMEALKERGIGTGLHFRAAHTQKYYRERFPTLSLPNTEWNSERICSLPLFPDMTTADADRVITALQQLAGQ</sequence>
<keyword id="KW-0032">Aminotransferase</keyword>
<keyword id="KW-0046">Antibiotic resistance</keyword>
<keyword id="KW-0441">Lipid A biosynthesis</keyword>
<keyword id="KW-0444">Lipid biosynthesis</keyword>
<keyword id="KW-0443">Lipid metabolism</keyword>
<keyword id="KW-0448">Lipopolysaccharide biosynthesis</keyword>
<keyword id="KW-0663">Pyridoxal phosphate</keyword>
<keyword id="KW-0808">Transferase</keyword>
<feature type="chain" id="PRO_0000380545" description="UDP-4-amino-4-deoxy-L-arabinose--oxoglutarate aminotransferase">
    <location>
        <begin position="1"/>
        <end position="379"/>
    </location>
</feature>
<feature type="modified residue" description="N6-(pyridoxal phosphate)lysine" evidence="1">
    <location>
        <position position="182"/>
    </location>
</feature>
<name>ARNB_SHIBS</name>
<organism>
    <name type="scientific">Shigella boydii serotype 4 (strain Sb227)</name>
    <dbReference type="NCBI Taxonomy" id="300268"/>
    <lineage>
        <taxon>Bacteria</taxon>
        <taxon>Pseudomonadati</taxon>
        <taxon>Pseudomonadota</taxon>
        <taxon>Gammaproteobacteria</taxon>
        <taxon>Enterobacterales</taxon>
        <taxon>Enterobacteriaceae</taxon>
        <taxon>Shigella</taxon>
    </lineage>
</organism>
<dbReference type="EC" id="2.6.1.87" evidence="1"/>
<dbReference type="EMBL" id="CP000036">
    <property type="protein sequence ID" value="ABB66854.1"/>
    <property type="status" value="ALT_INIT"/>
    <property type="molecule type" value="Genomic_DNA"/>
</dbReference>
<dbReference type="RefSeq" id="WP_001388277.1">
    <property type="nucleotide sequence ID" value="NC_007613.1"/>
</dbReference>
<dbReference type="SMR" id="Q31YK4"/>
<dbReference type="GeneID" id="93774921"/>
<dbReference type="KEGG" id="sbo:SBO_2290"/>
<dbReference type="HOGENOM" id="CLU_033332_0_3_6"/>
<dbReference type="UniPathway" id="UPA00030"/>
<dbReference type="UniPathway" id="UPA00032">
    <property type="reaction ID" value="UER00493"/>
</dbReference>
<dbReference type="Proteomes" id="UP000007067">
    <property type="component" value="Chromosome"/>
</dbReference>
<dbReference type="GO" id="GO:0016020">
    <property type="term" value="C:membrane"/>
    <property type="evidence" value="ECO:0007669"/>
    <property type="project" value="GOC"/>
</dbReference>
<dbReference type="GO" id="GO:0030170">
    <property type="term" value="F:pyridoxal phosphate binding"/>
    <property type="evidence" value="ECO:0007669"/>
    <property type="project" value="TreeGrafter"/>
</dbReference>
<dbReference type="GO" id="GO:0099620">
    <property type="term" value="F:UDP-4-amino-4-deoxy-L-arabinose aminotransferase"/>
    <property type="evidence" value="ECO:0007669"/>
    <property type="project" value="UniProtKB-EC"/>
</dbReference>
<dbReference type="GO" id="GO:0009245">
    <property type="term" value="P:lipid A biosynthetic process"/>
    <property type="evidence" value="ECO:0007669"/>
    <property type="project" value="UniProtKB-KW"/>
</dbReference>
<dbReference type="GO" id="GO:0009103">
    <property type="term" value="P:lipopolysaccharide biosynthetic process"/>
    <property type="evidence" value="ECO:0007669"/>
    <property type="project" value="UniProtKB-UniRule"/>
</dbReference>
<dbReference type="GO" id="GO:0046677">
    <property type="term" value="P:response to antibiotic"/>
    <property type="evidence" value="ECO:0007669"/>
    <property type="project" value="UniProtKB-KW"/>
</dbReference>
<dbReference type="CDD" id="cd00616">
    <property type="entry name" value="AHBA_syn"/>
    <property type="match status" value="1"/>
</dbReference>
<dbReference type="FunFam" id="3.40.640.10:FF:000040">
    <property type="entry name" value="UDP-4-amino-4-deoxy-L-arabinose--oxoglutarate aminotransferase"/>
    <property type="match status" value="1"/>
</dbReference>
<dbReference type="FunFam" id="3.90.1150.10:FF:000030">
    <property type="entry name" value="UDP-4-amino-4-deoxy-L-arabinose--oxoglutarate aminotransferase"/>
    <property type="match status" value="1"/>
</dbReference>
<dbReference type="Gene3D" id="3.90.1150.10">
    <property type="entry name" value="Aspartate Aminotransferase, domain 1"/>
    <property type="match status" value="1"/>
</dbReference>
<dbReference type="Gene3D" id="3.40.640.10">
    <property type="entry name" value="Type I PLP-dependent aspartate aminotransferase-like (Major domain)"/>
    <property type="match status" value="1"/>
</dbReference>
<dbReference type="HAMAP" id="MF_01167">
    <property type="entry name" value="ArnB_transfer"/>
    <property type="match status" value="1"/>
</dbReference>
<dbReference type="InterPro" id="IPR022850">
    <property type="entry name" value="ArnB_NH2Trfase"/>
</dbReference>
<dbReference type="InterPro" id="IPR000653">
    <property type="entry name" value="DegT/StrS_aminotransferase"/>
</dbReference>
<dbReference type="InterPro" id="IPR015424">
    <property type="entry name" value="PyrdxlP-dep_Trfase"/>
</dbReference>
<dbReference type="InterPro" id="IPR015421">
    <property type="entry name" value="PyrdxlP-dep_Trfase_major"/>
</dbReference>
<dbReference type="InterPro" id="IPR015422">
    <property type="entry name" value="PyrdxlP-dep_Trfase_small"/>
</dbReference>
<dbReference type="NCBIfam" id="NF008658">
    <property type="entry name" value="PRK11658.1"/>
    <property type="match status" value="1"/>
</dbReference>
<dbReference type="PANTHER" id="PTHR30244">
    <property type="entry name" value="TRANSAMINASE"/>
    <property type="match status" value="1"/>
</dbReference>
<dbReference type="PANTHER" id="PTHR30244:SF41">
    <property type="entry name" value="UDP-4-AMINO-4-DEOXY-L-ARABINOSE--OXOGLUTARATE AMINOTRANSFERASE"/>
    <property type="match status" value="1"/>
</dbReference>
<dbReference type="Pfam" id="PF01041">
    <property type="entry name" value="DegT_DnrJ_EryC1"/>
    <property type="match status" value="1"/>
</dbReference>
<dbReference type="PIRSF" id="PIRSF000390">
    <property type="entry name" value="PLP_StrS"/>
    <property type="match status" value="1"/>
</dbReference>
<dbReference type="SUPFAM" id="SSF53383">
    <property type="entry name" value="PLP-dependent transferases"/>
    <property type="match status" value="1"/>
</dbReference>